<protein>
    <recommendedName>
        <fullName evidence="8">Cholesterol transporter ABCA5</fullName>
        <ecNumber evidence="2">7.6.2.-</ecNumber>
    </recommendedName>
    <alternativeName>
        <fullName evidence="8">ATP-binding cassette sub-family A member 5</fullName>
    </alternativeName>
</protein>
<keyword id="KW-0025">Alternative splicing</keyword>
<keyword id="KW-0067">ATP-binding</keyword>
<keyword id="KW-1003">Cell membrane</keyword>
<keyword id="KW-0967">Endosome</keyword>
<keyword id="KW-0325">Glycoprotein</keyword>
<keyword id="KW-0333">Golgi apparatus</keyword>
<keyword id="KW-0445">Lipid transport</keyword>
<keyword id="KW-0458">Lysosome</keyword>
<keyword id="KW-0472">Membrane</keyword>
<keyword id="KW-0547">Nucleotide-binding</keyword>
<keyword id="KW-1185">Reference proteome</keyword>
<keyword id="KW-0677">Repeat</keyword>
<keyword id="KW-1278">Translocase</keyword>
<keyword id="KW-0812">Transmembrane</keyword>
<keyword id="KW-1133">Transmembrane helix</keyword>
<keyword id="KW-0813">Transport</keyword>
<evidence type="ECO:0000250" key="1"/>
<evidence type="ECO:0000250" key="2">
    <source>
        <dbReference type="UniProtKB" id="Q8K448"/>
    </source>
</evidence>
<evidence type="ECO:0000255" key="3"/>
<evidence type="ECO:0000255" key="4">
    <source>
        <dbReference type="PROSITE-ProRule" id="PRU00434"/>
    </source>
</evidence>
<evidence type="ECO:0000269" key="5">
    <source>
    </source>
</evidence>
<evidence type="ECO:0000269" key="6">
    <source>
    </source>
</evidence>
<evidence type="ECO:0000303" key="7">
    <source>
    </source>
</evidence>
<evidence type="ECO:0000305" key="8"/>
<evidence type="ECO:0000312" key="9">
    <source>
        <dbReference type="RGD" id="628661"/>
    </source>
</evidence>
<dbReference type="EC" id="7.6.2.-" evidence="2"/>
<dbReference type="EMBL" id="AJ426052">
    <property type="protein sequence ID" value="CAD19800.2"/>
    <property type="molecule type" value="mRNA"/>
</dbReference>
<dbReference type="EMBL" id="AJ550165">
    <property type="protein sequence ID" value="CAD80052.1"/>
    <property type="molecule type" value="mRNA"/>
</dbReference>
<dbReference type="RefSeq" id="NP_775429.1">
    <molecule id="Q8CF82-1"/>
    <property type="nucleotide sequence ID" value="NM_173307.1"/>
</dbReference>
<dbReference type="RefSeq" id="XP_063124573.1">
    <molecule id="Q8CF82-2"/>
    <property type="nucleotide sequence ID" value="XM_063268503.1"/>
</dbReference>
<dbReference type="SMR" id="Q8CF82"/>
<dbReference type="FunCoup" id="Q8CF82">
    <property type="interactions" value="1032"/>
</dbReference>
<dbReference type="STRING" id="10116.ENSRNOP00000066425"/>
<dbReference type="CarbonylDB" id="Q8CF82"/>
<dbReference type="GlyCosmos" id="Q8CF82">
    <property type="glycosylation" value="5 sites, No reported glycans"/>
</dbReference>
<dbReference type="GlyGen" id="Q8CF82">
    <property type="glycosylation" value="6 sites"/>
</dbReference>
<dbReference type="iPTMnet" id="Q8CF82"/>
<dbReference type="PhosphoSitePlus" id="Q8CF82"/>
<dbReference type="PaxDb" id="10116-ENSRNOP00000005848"/>
<dbReference type="Ensembl" id="ENSRNOT00000005848.7">
    <molecule id="Q8CF82-1"/>
    <property type="protein sequence ID" value="ENSRNOP00000005848.4"/>
    <property type="gene ID" value="ENSRNOG00000004378.8"/>
</dbReference>
<dbReference type="GeneID" id="286970"/>
<dbReference type="KEGG" id="rno:286970"/>
<dbReference type="AGR" id="RGD:628661"/>
<dbReference type="CTD" id="23461"/>
<dbReference type="RGD" id="628661">
    <property type="gene designation" value="Abca5"/>
</dbReference>
<dbReference type="eggNOG" id="KOG0059">
    <property type="taxonomic scope" value="Eukaryota"/>
</dbReference>
<dbReference type="GeneTree" id="ENSGT00940000158172"/>
<dbReference type="HOGENOM" id="CLU_000604_19_1_1"/>
<dbReference type="InParanoid" id="Q8CF82"/>
<dbReference type="OMA" id="YFTIVAP"/>
<dbReference type="OrthoDB" id="40614at9989"/>
<dbReference type="PhylomeDB" id="Q8CF82"/>
<dbReference type="TreeFam" id="TF105192"/>
<dbReference type="Reactome" id="R-RNO-1369062">
    <property type="pathway name" value="ABC transporters in lipid homeostasis"/>
</dbReference>
<dbReference type="PRO" id="PR:Q8CF82"/>
<dbReference type="Proteomes" id="UP000002494">
    <property type="component" value="Chromosome 10"/>
</dbReference>
<dbReference type="Bgee" id="ENSRNOG00000004378">
    <property type="expression patterns" value="Expressed in lung and 16 other cell types or tissues"/>
</dbReference>
<dbReference type="ExpressionAtlas" id="Q8CF82">
    <property type="expression patterns" value="baseline and differential"/>
</dbReference>
<dbReference type="GO" id="GO:0000139">
    <property type="term" value="C:Golgi membrane"/>
    <property type="evidence" value="ECO:0007669"/>
    <property type="project" value="UniProtKB-SubCell"/>
</dbReference>
<dbReference type="GO" id="GO:0005770">
    <property type="term" value="C:late endosome"/>
    <property type="evidence" value="ECO:0000266"/>
    <property type="project" value="RGD"/>
</dbReference>
<dbReference type="GO" id="GO:0031902">
    <property type="term" value="C:late endosome membrane"/>
    <property type="evidence" value="ECO:0007669"/>
    <property type="project" value="UniProtKB-SubCell"/>
</dbReference>
<dbReference type="GO" id="GO:0005765">
    <property type="term" value="C:lysosomal membrane"/>
    <property type="evidence" value="ECO:0007669"/>
    <property type="project" value="UniProtKB-SubCell"/>
</dbReference>
<dbReference type="GO" id="GO:0005764">
    <property type="term" value="C:lysosome"/>
    <property type="evidence" value="ECO:0000266"/>
    <property type="project" value="RGD"/>
</dbReference>
<dbReference type="GO" id="GO:0005886">
    <property type="term" value="C:plasma membrane"/>
    <property type="evidence" value="ECO:0007669"/>
    <property type="project" value="UniProtKB-SubCell"/>
</dbReference>
<dbReference type="GO" id="GO:0140359">
    <property type="term" value="F:ABC-type transporter activity"/>
    <property type="evidence" value="ECO:0007669"/>
    <property type="project" value="InterPro"/>
</dbReference>
<dbReference type="GO" id="GO:0005524">
    <property type="term" value="F:ATP binding"/>
    <property type="evidence" value="ECO:0007669"/>
    <property type="project" value="UniProtKB-KW"/>
</dbReference>
<dbReference type="GO" id="GO:0016887">
    <property type="term" value="F:ATP hydrolysis activity"/>
    <property type="evidence" value="ECO:0007669"/>
    <property type="project" value="InterPro"/>
</dbReference>
<dbReference type="GO" id="GO:0042626">
    <property type="term" value="F:ATPase-coupled transmembrane transporter activity"/>
    <property type="evidence" value="ECO:0000318"/>
    <property type="project" value="GO_Central"/>
</dbReference>
<dbReference type="GO" id="GO:0005319">
    <property type="term" value="F:lipid transporter activity"/>
    <property type="evidence" value="ECO:0000318"/>
    <property type="project" value="GO_Central"/>
</dbReference>
<dbReference type="GO" id="GO:0033344">
    <property type="term" value="P:cholesterol efflux"/>
    <property type="evidence" value="ECO:0000266"/>
    <property type="project" value="RGD"/>
</dbReference>
<dbReference type="GO" id="GO:0042632">
    <property type="term" value="P:cholesterol homeostasis"/>
    <property type="evidence" value="ECO:0000250"/>
    <property type="project" value="UniProtKB"/>
</dbReference>
<dbReference type="GO" id="GO:0008203">
    <property type="term" value="P:cholesterol metabolic process"/>
    <property type="evidence" value="ECO:0000250"/>
    <property type="project" value="UniProtKB"/>
</dbReference>
<dbReference type="GO" id="GO:0034375">
    <property type="term" value="P:high-density lipoprotein particle remodeling"/>
    <property type="evidence" value="ECO:0000266"/>
    <property type="project" value="RGD"/>
</dbReference>
<dbReference type="GO" id="GO:0006869">
    <property type="term" value="P:lipid transport"/>
    <property type="evidence" value="ECO:0000318"/>
    <property type="project" value="GO_Central"/>
</dbReference>
<dbReference type="GO" id="GO:0010745">
    <property type="term" value="P:negative regulation of macrophage derived foam cell differentiation"/>
    <property type="evidence" value="ECO:0000266"/>
    <property type="project" value="RGD"/>
</dbReference>
<dbReference type="GO" id="GO:1903064">
    <property type="term" value="P:positive regulation of reverse cholesterol transport"/>
    <property type="evidence" value="ECO:0000250"/>
    <property type="project" value="UniProtKB"/>
</dbReference>
<dbReference type="GO" id="GO:0010874">
    <property type="term" value="P:regulation of cholesterol efflux"/>
    <property type="evidence" value="ECO:0000250"/>
    <property type="project" value="UniProtKB"/>
</dbReference>
<dbReference type="GO" id="GO:0015918">
    <property type="term" value="P:sterol transport"/>
    <property type="evidence" value="ECO:0000303"/>
    <property type="project" value="RGD"/>
</dbReference>
<dbReference type="CDD" id="cd03263">
    <property type="entry name" value="ABC_subfamily_A"/>
    <property type="match status" value="2"/>
</dbReference>
<dbReference type="FunFam" id="3.40.50.300:FF:000335">
    <property type="entry name" value="ATP binding cassette subfamily A member 5"/>
    <property type="match status" value="1"/>
</dbReference>
<dbReference type="FunFam" id="3.40.50.300:FF:000729">
    <property type="entry name" value="ATP-binding cassette, sub-family A (ABC1), member 5"/>
    <property type="match status" value="1"/>
</dbReference>
<dbReference type="Gene3D" id="3.40.50.300">
    <property type="entry name" value="P-loop containing nucleotide triphosphate hydrolases"/>
    <property type="match status" value="2"/>
</dbReference>
<dbReference type="InterPro" id="IPR003593">
    <property type="entry name" value="AAA+_ATPase"/>
</dbReference>
<dbReference type="InterPro" id="IPR013525">
    <property type="entry name" value="ABC2_TM"/>
</dbReference>
<dbReference type="InterPro" id="IPR003439">
    <property type="entry name" value="ABC_transporter-like_ATP-bd"/>
</dbReference>
<dbReference type="InterPro" id="IPR017871">
    <property type="entry name" value="ABC_transporter-like_CS"/>
</dbReference>
<dbReference type="InterPro" id="IPR026082">
    <property type="entry name" value="ABCA"/>
</dbReference>
<dbReference type="InterPro" id="IPR027417">
    <property type="entry name" value="P-loop_NTPase"/>
</dbReference>
<dbReference type="InterPro" id="IPR056264">
    <property type="entry name" value="R2_ABCA1-4-like"/>
</dbReference>
<dbReference type="PANTHER" id="PTHR19229">
    <property type="entry name" value="ATP-BINDING CASSETTE TRANSPORTER SUBFAMILY A ABCA"/>
    <property type="match status" value="1"/>
</dbReference>
<dbReference type="PANTHER" id="PTHR19229:SF100">
    <property type="entry name" value="CHOLESTEROL TRANSPORTER ABCA5"/>
    <property type="match status" value="1"/>
</dbReference>
<dbReference type="Pfam" id="PF12698">
    <property type="entry name" value="ABC2_membrane_3"/>
    <property type="match status" value="1"/>
</dbReference>
<dbReference type="Pfam" id="PF00005">
    <property type="entry name" value="ABC_tran"/>
    <property type="match status" value="2"/>
</dbReference>
<dbReference type="Pfam" id="PF23321">
    <property type="entry name" value="R1_ABCA1"/>
    <property type="match status" value="1"/>
</dbReference>
<dbReference type="SMART" id="SM00382">
    <property type="entry name" value="AAA"/>
    <property type="match status" value="2"/>
</dbReference>
<dbReference type="SUPFAM" id="SSF52540">
    <property type="entry name" value="P-loop containing nucleoside triphosphate hydrolases"/>
    <property type="match status" value="2"/>
</dbReference>
<dbReference type="PROSITE" id="PS00211">
    <property type="entry name" value="ABC_TRANSPORTER_1"/>
    <property type="match status" value="1"/>
</dbReference>
<dbReference type="PROSITE" id="PS50893">
    <property type="entry name" value="ABC_TRANSPORTER_2"/>
    <property type="match status" value="2"/>
</dbReference>
<accession>Q8CF82</accession>
<accession>Q80Z07</accession>
<proteinExistence type="evidence at transcript level"/>
<name>ABCA5_RAT</name>
<organism>
    <name type="scientific">Rattus norvegicus</name>
    <name type="common">Rat</name>
    <dbReference type="NCBI Taxonomy" id="10116"/>
    <lineage>
        <taxon>Eukaryota</taxon>
        <taxon>Metazoa</taxon>
        <taxon>Chordata</taxon>
        <taxon>Craniata</taxon>
        <taxon>Vertebrata</taxon>
        <taxon>Euteleostomi</taxon>
        <taxon>Mammalia</taxon>
        <taxon>Eutheria</taxon>
        <taxon>Euarchontoglires</taxon>
        <taxon>Glires</taxon>
        <taxon>Rodentia</taxon>
        <taxon>Myomorpha</taxon>
        <taxon>Muroidea</taxon>
        <taxon>Muridae</taxon>
        <taxon>Murinae</taxon>
        <taxon>Rattus</taxon>
    </lineage>
</organism>
<sequence>MATAIRDVGVWRQTRTLLLKNYLVKCRTKKSSVQEILFPLFFLFWLILISMMHPNKKYEEVSDIELSPMDKSILSNLILGYTPVTNTTSSVMQRVSTDHLPDVLVTEEYASEKELLASSLSKPSNFVGVVFKDVMSYELRFFPDMVPVSSVYMDSRAGCSKSCDAAQYWSSGFTALQASIDAAIIQLKTNVSLWRELESTKAVIMGEAAVVEIDTFPRGVILIYLVIAFSPFGYFLAIHIVAEKEKRLKEFLKIMGLHDTAFWLSWVLLYTSLIFLMSLLMAVIATASSLFPQSSSIVIFLLFFLYGLSSVFFALMLTPLFKKSKHVGVVEFFVTVVFGFVGLLIVLVESFPRSLVWLFSPLCQCAFLIGIAQVMHLEDFNEGALFSSLTEGPYPLIITLTMLALDSVFYALLAVYLDQVIPGEFGLRRSSLYFLKPSYWSKNKRNYKELSEGNINGNISLNEIVEPVSSEFIGKEAIRISGIQKAYRKKNETVEALRNLSFDIYEGQITALLGHSGTGKSTLMNILCGLCPPSDGFASIYGHRVSEIDEMFEARKMIGICPQSDMNFDVLTVEENLSILASVKGIPANNIIQEVQKVLLDLDMQAIKDNQAKKLSGGQKRKLSLGIAVLGNPKILLLDEPTAGMDPCSRHIVWNLLKYRKANRVTVFSTHFMDEADILADRKAVISQGMLKCVGSSIFLKSKWGIGYRLSMYIDRYCATESLSSLVRQHIPAAALLQQNDQQIVYSLPFKDMDKFSGLFSALDIHSNLGVISYGVSMTTLEDVFLKLEVEAEIDQADYSVFTQQPREEETDSKSFDEMEQSLLILSETKASLVSTMSLWKQQVSTIAKFHFLSLKRESKSVRSVLLLLLIFFAVQIFMFLVHHSFKNAVVPIKLVPDLYFLKPGDKPHKYKTSLLLQNSTDSDINDLIDFFTQQNIIVAMFNDSDYVSAAPHSAALNVVQSEKDYVFTAVFNSTMVYSLPVMMNIISNYYLYHLNVTDTIQIWSTPFIQEITDIVFKVELYFQAALLGIIVTAMPPYFAMENAENHKIKAYTQLKLSGLLPSAYWIGQAVVDIPLFFVVLTLMLGSLFAFHHGLYFYPVKFLAVVFCLIAYVPSVILFTYIASFTFKKILNTKEFWSFIYSVTALACVAVTEITFFLGYGVTAVFHYTFCIAIPIYPLLGCLISFIKGSWKNIPKTENAYNPWDRLLVAVIMPYLQCVLWIFLLQHYEKKHGGRSIRKDPLFRALSQKAKHKKFPEPPINEDEDEDVKAERLKVKELMGCQCCEEKPAIMVYNLHKEYDDKKDFLHSRKTTKVATKYVSFCVKKGEILGLLGPNGAGKSTIINILVGDVEPTSGKIFLGDYGSHSNEDDESTKCMGYCPQTNPLWPDITLQEHFEIYGAVKGMSSGDMKEVISRITKALDLKEHLQKTVKKLPAGIKRKLCFALSMLGNPQVTLLDEPSTGMDPRAKQHMWRAIRTAFKNKKRAALLTTHYMEEAEAVCDRVAIMVSGQLRCIGTVQHLKSKFGKGYFLEIKLKDWIENLEIDRLQREIQYIFPNASRQESFSSILAYKIPKEDVQSLSQSFAKLEEAKHTFAIEEYSFSQATLEQVFVELTKEQEEEDNSCGTLNSTLWWERRQEDRVVF</sequence>
<comment type="function">
    <text evidence="2">Cholesterol efflux transporter in macrophages that is responsible for APOAI/high-density lipoproteins (HDL) formation at the plasma membrane under high cholesterol levels and participates in reverse cholesterol transport. May play a role in the processing of autolysosomes.</text>
</comment>
<comment type="catalytic activity">
    <reaction evidence="2">
        <text>cholesterol(in) + ATP + H2O = cholesterol(out) + ADP + phosphate + H(+)</text>
        <dbReference type="Rhea" id="RHEA:39051"/>
        <dbReference type="ChEBI" id="CHEBI:15377"/>
        <dbReference type="ChEBI" id="CHEBI:15378"/>
        <dbReference type="ChEBI" id="CHEBI:16113"/>
        <dbReference type="ChEBI" id="CHEBI:30616"/>
        <dbReference type="ChEBI" id="CHEBI:43474"/>
        <dbReference type="ChEBI" id="CHEBI:456216"/>
    </reaction>
    <physiologicalReaction direction="left-to-right" evidence="2">
        <dbReference type="Rhea" id="RHEA:39052"/>
    </physiologicalReaction>
</comment>
<comment type="subcellular location">
    <subcellularLocation>
        <location evidence="6">Lysosome membrane</location>
        <topology evidence="6">Multi-pass membrane protein</topology>
    </subcellularLocation>
    <subcellularLocation>
        <location evidence="1">Late endosome membrane</location>
        <topology evidence="1">Multi-pass membrane protein</topology>
    </subcellularLocation>
    <subcellularLocation>
        <location evidence="6">Golgi apparatus membrane</location>
        <topology evidence="6">Multi-pass membrane protein</topology>
    </subcellularLocation>
    <subcellularLocation>
        <location evidence="2">Cell membrane</location>
    </subcellularLocation>
    <text evidence="2">Localized at cell membrane under high cholesterol levels.</text>
</comment>
<comment type="alternative products">
    <event type="alternative splicing"/>
    <isoform>
        <id>Q8CF82-1</id>
        <name>1</name>
        <sequence type="displayed"/>
    </isoform>
    <isoform>
        <id>Q8CF82-2</id>
        <name>2</name>
        <name>V20+16</name>
        <sequence type="described" ref="VSP_020693 VSP_020694"/>
    </isoform>
</comment>
<comment type="tissue specificity">
    <text evidence="5 6">Expressed in testis, epididymis, lung and brain.</text>
</comment>
<comment type="PTM">
    <text evidence="1">N-glycosylated.</text>
</comment>
<comment type="similarity">
    <text evidence="8">Belongs to the ABC transporter superfamily. ABCA family.</text>
</comment>
<gene>
    <name evidence="9" type="primary">Abca5</name>
</gene>
<reference key="1">
    <citation type="journal article" date="2003" name="Biochem. Biophys. Res. Commun.">
        <title>Cloning of human and rat ABCA5/Abca5 and detection of a human splice variant.</title>
        <authorList>
            <person name="Petry F."/>
            <person name="Kotthaus A."/>
            <person name="Hirsch-Ernst K.I."/>
        </authorList>
    </citation>
    <scope>NUCLEOTIDE SEQUENCE [MRNA] (ISOFORM 1)</scope>
    <scope>TISSUE SPECIFICITY</scope>
    <source>
        <strain>Wistar</strain>
    </source>
</reference>
<reference key="2">
    <citation type="journal article" date="2006" name="Biochem. J.">
        <title>Subcellular localization of rat Abca5, a rat ATP-binding-cassette transporter expressed in Leydig cells, and characterization of its splice variant apparently encoding a half-transporter.</title>
        <authorList>
            <person name="Petry F."/>
            <person name="Ritz V."/>
            <person name="Meineke C."/>
            <person name="Middel P."/>
            <person name="Kietzmann T."/>
            <person name="Schmitz-Salue C."/>
            <person name="Hirsch-Ernst K.I."/>
        </authorList>
    </citation>
    <scope>NUCLEOTIDE SEQUENCE [MRNA] (ISOFORM 2)</scope>
    <scope>TISSUE SPECIFICITY</scope>
    <scope>SUBCELLULAR LOCATION</scope>
    <source>
        <strain>Wistar</strain>
        <tissue>Testis</tissue>
    </source>
</reference>
<feature type="chain" id="PRO_0000250671" description="Cholesterol transporter ABCA5">
    <location>
        <begin position="1"/>
        <end position="1642"/>
    </location>
</feature>
<feature type="transmembrane region" description="Helical" evidence="3">
    <location>
        <begin position="32"/>
        <end position="52"/>
    </location>
</feature>
<feature type="transmembrane region" description="Helical" evidence="3">
    <location>
        <begin position="220"/>
        <end position="240"/>
    </location>
</feature>
<feature type="transmembrane region" description="Helical" evidence="3">
    <location>
        <begin position="264"/>
        <end position="284"/>
    </location>
</feature>
<feature type="transmembrane region" description="Helical" evidence="3">
    <location>
        <begin position="297"/>
        <end position="317"/>
    </location>
</feature>
<feature type="transmembrane region" description="Helical" evidence="3">
    <location>
        <begin position="327"/>
        <end position="347"/>
    </location>
</feature>
<feature type="transmembrane region" description="Helical" evidence="3">
    <location>
        <begin position="355"/>
        <end position="375"/>
    </location>
</feature>
<feature type="transmembrane region" description="Helical" evidence="3">
    <location>
        <begin position="396"/>
        <end position="416"/>
    </location>
</feature>
<feature type="transmembrane region" description="Helical" evidence="3">
    <location>
        <begin position="866"/>
        <end position="886"/>
    </location>
</feature>
<feature type="transmembrane region" description="Helical" evidence="3">
    <location>
        <begin position="967"/>
        <end position="987"/>
    </location>
</feature>
<feature type="transmembrane region" description="Helical" evidence="3">
    <location>
        <begin position="1021"/>
        <end position="1041"/>
    </location>
</feature>
<feature type="transmembrane region" description="Helical" evidence="3">
    <location>
        <begin position="1071"/>
        <end position="1091"/>
    </location>
</feature>
<feature type="transmembrane region" description="Helical" evidence="3">
    <location>
        <begin position="1102"/>
        <end position="1122"/>
    </location>
</feature>
<feature type="transmembrane region" description="Helical" evidence="3">
    <location>
        <begin position="1139"/>
        <end position="1159"/>
    </location>
</feature>
<feature type="transmembrane region" description="Helical" evidence="3">
    <location>
        <begin position="1164"/>
        <end position="1184"/>
    </location>
</feature>
<feature type="transmembrane region" description="Helical" evidence="3">
    <location>
        <begin position="1207"/>
        <end position="1227"/>
    </location>
</feature>
<feature type="domain" description="ABC transporter 1" evidence="4">
    <location>
        <begin position="478"/>
        <end position="713"/>
    </location>
</feature>
<feature type="domain" description="ABC transporter 2" evidence="4">
    <location>
        <begin position="1290"/>
        <end position="1533"/>
    </location>
</feature>
<feature type="binding site" evidence="4">
    <location>
        <begin position="514"/>
        <end position="521"/>
    </location>
    <ligand>
        <name>ATP</name>
        <dbReference type="ChEBI" id="CHEBI:30616"/>
        <label>1</label>
    </ligand>
</feature>
<feature type="binding site" evidence="4">
    <location>
        <begin position="1333"/>
        <end position="1340"/>
    </location>
    <ligand>
        <name>ATP</name>
        <dbReference type="ChEBI" id="CHEBI:30616"/>
        <label>2</label>
    </ligand>
</feature>
<feature type="glycosylation site" description="N-linked (GlcNAc...) asparagine" evidence="3">
    <location>
        <position position="86"/>
    </location>
</feature>
<feature type="glycosylation site" description="N-linked (GlcNAc...) asparagine" evidence="3">
    <location>
        <position position="190"/>
    </location>
</feature>
<feature type="glycosylation site" description="N-linked (GlcNAc...) asparagine" evidence="3">
    <location>
        <position position="458"/>
    </location>
</feature>
<feature type="glycosylation site" description="N-linked (GlcNAc...) asparagine" evidence="3">
    <location>
        <position position="919"/>
    </location>
</feature>
<feature type="glycosylation site" description="N-linked (GlcNAc...) asparagine" evidence="3">
    <location>
        <position position="996"/>
    </location>
</feature>
<feature type="splice variant" id="VSP_020693" description="In isoform 2." evidence="7">
    <original>DSDI</original>
    <variation>GESV</variation>
    <location>
        <begin position="922"/>
        <end position="925"/>
    </location>
</feature>
<feature type="splice variant" id="VSP_020694" description="In isoform 2." evidence="7">
    <location>
        <begin position="926"/>
        <end position="1642"/>
    </location>
</feature>